<gene>
    <name evidence="1" type="primary">dnaJ</name>
    <name type="ordered locus">A1S_3443</name>
</gene>
<protein>
    <recommendedName>
        <fullName evidence="1">Chaperone protein DnaJ</fullName>
    </recommendedName>
</protein>
<sequence length="370" mass="40464">MAKRDYYEVLGVSKTASDDEIKKAYRKLAMKYHPDRNPDNAEAEEKFKEASEAYEILSDSEKRSMYDRMGHNAFEGGFGGAGGGFGGFSAEDIFSQFGDIFGGAFGGGGRQQRQRRGSDLRYVMELTLEEAVKGVKKTITFTAPAPCDVCDGKGSKNPKDVETCKTCHGSGQVRMQQGFFSVQQTCGTCRGQGKIIKNPCHACHGSGVADRQQTLEVTIPAGVDNGDRVRLSGKGEAIRDGQAGDLYVEVVVREHEIFQRDGADLYMDVPVSIADAALGKEIEIPTLEGRVSLKIPEGTQTGKLFRLRGKGVRPVRSSMVGDLLCRIVVETPVNLTSRQRELLKELQASFDGEDSASSPKKKSFFDRLFD</sequence>
<comment type="function">
    <text evidence="1">Participates actively in the response to hyperosmotic and heat shock by preventing the aggregation of stress-denatured proteins and by disaggregating proteins, also in an autonomous, DnaK-independent fashion. Unfolded proteins bind initially to DnaJ; upon interaction with the DnaJ-bound protein, DnaK hydrolyzes its bound ATP, resulting in the formation of a stable complex. GrpE releases ADP from DnaK; ATP binding to DnaK triggers the release of the substrate protein, thus completing the reaction cycle. Several rounds of ATP-dependent interactions between DnaJ, DnaK and GrpE are required for fully efficient folding. Also involved, together with DnaK and GrpE, in the DNA replication of plasmids through activation of initiation proteins.</text>
</comment>
<comment type="cofactor">
    <cofactor evidence="1">
        <name>Zn(2+)</name>
        <dbReference type="ChEBI" id="CHEBI:29105"/>
    </cofactor>
    <text evidence="1">Binds 2 Zn(2+) ions per monomer.</text>
</comment>
<comment type="subunit">
    <text evidence="1">Homodimer.</text>
</comment>
<comment type="subcellular location">
    <subcellularLocation>
        <location evidence="1">Cytoplasm</location>
    </subcellularLocation>
</comment>
<comment type="domain">
    <text evidence="1">The J domain is necessary and sufficient to stimulate DnaK ATPase activity. Zinc center 1 plays an important role in the autonomous, DnaK-independent chaperone activity of DnaJ. Zinc center 2 is essential for interaction with DnaK and for DnaJ activity.</text>
</comment>
<comment type="similarity">
    <text evidence="1">Belongs to the DnaJ family.</text>
</comment>
<reference key="1">
    <citation type="journal article" date="2007" name="Genes Dev.">
        <title>New insights into Acinetobacter baumannii pathogenesis revealed by high-density pyrosequencing and transposon mutagenesis.</title>
        <authorList>
            <person name="Smith M.G."/>
            <person name="Gianoulis T.A."/>
            <person name="Pukatzki S."/>
            <person name="Mekalanos J.J."/>
            <person name="Ornston L.N."/>
            <person name="Gerstein M."/>
            <person name="Snyder M."/>
        </authorList>
    </citation>
    <scope>NUCLEOTIDE SEQUENCE [LARGE SCALE GENOMIC DNA]</scope>
    <source>
        <strain>ATCC 17978 / DSM 105126 / CIP 53.77 / LMG 1025 / NCDC KC755 / 5377</strain>
    </source>
</reference>
<proteinExistence type="inferred from homology"/>
<evidence type="ECO:0000255" key="1">
    <source>
        <dbReference type="HAMAP-Rule" id="MF_01152"/>
    </source>
</evidence>
<evidence type="ECO:0000256" key="2">
    <source>
        <dbReference type="SAM" id="MobiDB-lite"/>
    </source>
</evidence>
<accession>A3MA88</accession>
<feature type="chain" id="PRO_1000137651" description="Chaperone protein DnaJ">
    <location>
        <begin position="1"/>
        <end position="370"/>
    </location>
</feature>
<feature type="domain" description="J" evidence="1">
    <location>
        <begin position="5"/>
        <end position="70"/>
    </location>
</feature>
<feature type="repeat" description="CXXCXGXG motif">
    <location>
        <begin position="147"/>
        <end position="154"/>
    </location>
</feature>
<feature type="repeat" description="CXXCXGXG motif">
    <location>
        <begin position="164"/>
        <end position="171"/>
    </location>
</feature>
<feature type="repeat" description="CXXCXGXG motif">
    <location>
        <begin position="186"/>
        <end position="193"/>
    </location>
</feature>
<feature type="repeat" description="CXXCXGXG motif">
    <location>
        <begin position="200"/>
        <end position="207"/>
    </location>
</feature>
<feature type="zinc finger region" description="CR-type" evidence="1">
    <location>
        <begin position="134"/>
        <end position="212"/>
    </location>
</feature>
<feature type="region of interest" description="Disordered" evidence="2">
    <location>
        <begin position="351"/>
        <end position="370"/>
    </location>
</feature>
<feature type="binding site" evidence="1">
    <location>
        <position position="147"/>
    </location>
    <ligand>
        <name>Zn(2+)</name>
        <dbReference type="ChEBI" id="CHEBI:29105"/>
        <label>1</label>
    </ligand>
</feature>
<feature type="binding site" evidence="1">
    <location>
        <position position="150"/>
    </location>
    <ligand>
        <name>Zn(2+)</name>
        <dbReference type="ChEBI" id="CHEBI:29105"/>
        <label>1</label>
    </ligand>
</feature>
<feature type="binding site" evidence="1">
    <location>
        <position position="164"/>
    </location>
    <ligand>
        <name>Zn(2+)</name>
        <dbReference type="ChEBI" id="CHEBI:29105"/>
        <label>2</label>
    </ligand>
</feature>
<feature type="binding site" evidence="1">
    <location>
        <position position="167"/>
    </location>
    <ligand>
        <name>Zn(2+)</name>
        <dbReference type="ChEBI" id="CHEBI:29105"/>
        <label>2</label>
    </ligand>
</feature>
<feature type="binding site" evidence="1">
    <location>
        <position position="186"/>
    </location>
    <ligand>
        <name>Zn(2+)</name>
        <dbReference type="ChEBI" id="CHEBI:29105"/>
        <label>2</label>
    </ligand>
</feature>
<feature type="binding site" evidence="1">
    <location>
        <position position="189"/>
    </location>
    <ligand>
        <name>Zn(2+)</name>
        <dbReference type="ChEBI" id="CHEBI:29105"/>
        <label>2</label>
    </ligand>
</feature>
<feature type="binding site" evidence="1">
    <location>
        <position position="200"/>
    </location>
    <ligand>
        <name>Zn(2+)</name>
        <dbReference type="ChEBI" id="CHEBI:29105"/>
        <label>1</label>
    </ligand>
</feature>
<feature type="binding site" evidence="1">
    <location>
        <position position="203"/>
    </location>
    <ligand>
        <name>Zn(2+)</name>
        <dbReference type="ChEBI" id="CHEBI:29105"/>
        <label>1</label>
    </ligand>
</feature>
<organism>
    <name type="scientific">Acinetobacter baumannii (strain ATCC 17978 / DSM 105126 / CIP 53.77 / LMG 1025 / NCDC KC755 / 5377)</name>
    <dbReference type="NCBI Taxonomy" id="400667"/>
    <lineage>
        <taxon>Bacteria</taxon>
        <taxon>Pseudomonadati</taxon>
        <taxon>Pseudomonadota</taxon>
        <taxon>Gammaproteobacteria</taxon>
        <taxon>Moraxellales</taxon>
        <taxon>Moraxellaceae</taxon>
        <taxon>Acinetobacter</taxon>
        <taxon>Acinetobacter calcoaceticus/baumannii complex</taxon>
    </lineage>
</organism>
<keyword id="KW-0143">Chaperone</keyword>
<keyword id="KW-0963">Cytoplasm</keyword>
<keyword id="KW-0235">DNA replication</keyword>
<keyword id="KW-0479">Metal-binding</keyword>
<keyword id="KW-0677">Repeat</keyword>
<keyword id="KW-0346">Stress response</keyword>
<keyword id="KW-0862">Zinc</keyword>
<keyword id="KW-0863">Zinc-finger</keyword>
<dbReference type="EMBL" id="CP000521">
    <property type="protein sequence ID" value="ABO13832.2"/>
    <property type="molecule type" value="Genomic_DNA"/>
</dbReference>
<dbReference type="RefSeq" id="WP_001119029.1">
    <property type="nucleotide sequence ID" value="NZ_CP053098.1"/>
</dbReference>
<dbReference type="SMR" id="A3MA88"/>
<dbReference type="GeneID" id="92895684"/>
<dbReference type="KEGG" id="acb:A1S_3443"/>
<dbReference type="HOGENOM" id="CLU_017633_0_7_6"/>
<dbReference type="GO" id="GO:0005737">
    <property type="term" value="C:cytoplasm"/>
    <property type="evidence" value="ECO:0007669"/>
    <property type="project" value="UniProtKB-SubCell"/>
</dbReference>
<dbReference type="GO" id="GO:0005524">
    <property type="term" value="F:ATP binding"/>
    <property type="evidence" value="ECO:0007669"/>
    <property type="project" value="InterPro"/>
</dbReference>
<dbReference type="GO" id="GO:0031072">
    <property type="term" value="F:heat shock protein binding"/>
    <property type="evidence" value="ECO:0007669"/>
    <property type="project" value="InterPro"/>
</dbReference>
<dbReference type="GO" id="GO:0051082">
    <property type="term" value="F:unfolded protein binding"/>
    <property type="evidence" value="ECO:0007669"/>
    <property type="project" value="UniProtKB-UniRule"/>
</dbReference>
<dbReference type="GO" id="GO:0008270">
    <property type="term" value="F:zinc ion binding"/>
    <property type="evidence" value="ECO:0007669"/>
    <property type="project" value="UniProtKB-UniRule"/>
</dbReference>
<dbReference type="GO" id="GO:0051085">
    <property type="term" value="P:chaperone cofactor-dependent protein refolding"/>
    <property type="evidence" value="ECO:0007669"/>
    <property type="project" value="TreeGrafter"/>
</dbReference>
<dbReference type="GO" id="GO:0006260">
    <property type="term" value="P:DNA replication"/>
    <property type="evidence" value="ECO:0007669"/>
    <property type="project" value="UniProtKB-KW"/>
</dbReference>
<dbReference type="GO" id="GO:0042026">
    <property type="term" value="P:protein refolding"/>
    <property type="evidence" value="ECO:0007669"/>
    <property type="project" value="TreeGrafter"/>
</dbReference>
<dbReference type="GO" id="GO:0009408">
    <property type="term" value="P:response to heat"/>
    <property type="evidence" value="ECO:0007669"/>
    <property type="project" value="InterPro"/>
</dbReference>
<dbReference type="CDD" id="cd06257">
    <property type="entry name" value="DnaJ"/>
    <property type="match status" value="1"/>
</dbReference>
<dbReference type="CDD" id="cd10747">
    <property type="entry name" value="DnaJ_C"/>
    <property type="match status" value="1"/>
</dbReference>
<dbReference type="CDD" id="cd10719">
    <property type="entry name" value="DnaJ_zf"/>
    <property type="match status" value="1"/>
</dbReference>
<dbReference type="FunFam" id="1.10.287.110:FF:000034">
    <property type="entry name" value="Chaperone protein DnaJ"/>
    <property type="match status" value="1"/>
</dbReference>
<dbReference type="FunFam" id="2.10.230.10:FF:000002">
    <property type="entry name" value="Molecular chaperone DnaJ"/>
    <property type="match status" value="1"/>
</dbReference>
<dbReference type="FunFam" id="2.60.260.20:FF:000004">
    <property type="entry name" value="Molecular chaperone DnaJ"/>
    <property type="match status" value="1"/>
</dbReference>
<dbReference type="Gene3D" id="1.10.287.110">
    <property type="entry name" value="DnaJ domain"/>
    <property type="match status" value="1"/>
</dbReference>
<dbReference type="Gene3D" id="2.10.230.10">
    <property type="entry name" value="Heat shock protein DnaJ, cysteine-rich domain"/>
    <property type="match status" value="1"/>
</dbReference>
<dbReference type="Gene3D" id="2.60.260.20">
    <property type="entry name" value="Urease metallochaperone UreE, N-terminal domain"/>
    <property type="match status" value="2"/>
</dbReference>
<dbReference type="HAMAP" id="MF_01152">
    <property type="entry name" value="DnaJ"/>
    <property type="match status" value="1"/>
</dbReference>
<dbReference type="InterPro" id="IPR012724">
    <property type="entry name" value="DnaJ"/>
</dbReference>
<dbReference type="InterPro" id="IPR002939">
    <property type="entry name" value="DnaJ_C"/>
</dbReference>
<dbReference type="InterPro" id="IPR001623">
    <property type="entry name" value="DnaJ_domain"/>
</dbReference>
<dbReference type="InterPro" id="IPR018253">
    <property type="entry name" value="DnaJ_domain_CS"/>
</dbReference>
<dbReference type="InterPro" id="IPR008971">
    <property type="entry name" value="HSP40/DnaJ_pept-bd"/>
</dbReference>
<dbReference type="InterPro" id="IPR001305">
    <property type="entry name" value="HSP_DnaJ_Cys-rich_dom"/>
</dbReference>
<dbReference type="InterPro" id="IPR036410">
    <property type="entry name" value="HSP_DnaJ_Cys-rich_dom_sf"/>
</dbReference>
<dbReference type="InterPro" id="IPR036869">
    <property type="entry name" value="J_dom_sf"/>
</dbReference>
<dbReference type="NCBIfam" id="TIGR02349">
    <property type="entry name" value="DnaJ_bact"/>
    <property type="match status" value="1"/>
</dbReference>
<dbReference type="NCBIfam" id="NF008035">
    <property type="entry name" value="PRK10767.1"/>
    <property type="match status" value="1"/>
</dbReference>
<dbReference type="PANTHER" id="PTHR43096:SF48">
    <property type="entry name" value="CHAPERONE PROTEIN DNAJ"/>
    <property type="match status" value="1"/>
</dbReference>
<dbReference type="PANTHER" id="PTHR43096">
    <property type="entry name" value="DNAJ HOMOLOG 1, MITOCHONDRIAL-RELATED"/>
    <property type="match status" value="1"/>
</dbReference>
<dbReference type="Pfam" id="PF00226">
    <property type="entry name" value="DnaJ"/>
    <property type="match status" value="1"/>
</dbReference>
<dbReference type="Pfam" id="PF01556">
    <property type="entry name" value="DnaJ_C"/>
    <property type="match status" value="1"/>
</dbReference>
<dbReference type="Pfam" id="PF00684">
    <property type="entry name" value="DnaJ_CXXCXGXG"/>
    <property type="match status" value="1"/>
</dbReference>
<dbReference type="PRINTS" id="PR00625">
    <property type="entry name" value="JDOMAIN"/>
</dbReference>
<dbReference type="SMART" id="SM00271">
    <property type="entry name" value="DnaJ"/>
    <property type="match status" value="1"/>
</dbReference>
<dbReference type="SUPFAM" id="SSF46565">
    <property type="entry name" value="Chaperone J-domain"/>
    <property type="match status" value="1"/>
</dbReference>
<dbReference type="SUPFAM" id="SSF57938">
    <property type="entry name" value="DnaJ/Hsp40 cysteine-rich domain"/>
    <property type="match status" value="1"/>
</dbReference>
<dbReference type="SUPFAM" id="SSF49493">
    <property type="entry name" value="HSP40/DnaJ peptide-binding domain"/>
    <property type="match status" value="2"/>
</dbReference>
<dbReference type="PROSITE" id="PS00636">
    <property type="entry name" value="DNAJ_1"/>
    <property type="match status" value="1"/>
</dbReference>
<dbReference type="PROSITE" id="PS50076">
    <property type="entry name" value="DNAJ_2"/>
    <property type="match status" value="1"/>
</dbReference>
<dbReference type="PROSITE" id="PS51188">
    <property type="entry name" value="ZF_CR"/>
    <property type="match status" value="1"/>
</dbReference>
<name>DNAJ_ACIBT</name>